<evidence type="ECO:0000255" key="1">
    <source>
        <dbReference type="HAMAP-Rule" id="MF_01216"/>
    </source>
</evidence>
<reference key="1">
    <citation type="journal article" date="2008" name="Antimicrob. Agents Chemother.">
        <title>Mutated response regulator graR is responsible for phenotypic conversion of Staphylococcus aureus from heterogeneous vancomycin-intermediate resistance to vancomycin-intermediate resistance.</title>
        <authorList>
            <person name="Neoh H.-M."/>
            <person name="Cui L."/>
            <person name="Yuzawa H."/>
            <person name="Takeuchi F."/>
            <person name="Matsuo M."/>
            <person name="Hiramatsu K."/>
        </authorList>
    </citation>
    <scope>NUCLEOTIDE SEQUENCE [LARGE SCALE GENOMIC DNA]</scope>
    <source>
        <strain>Mu3 / ATCC 700698</strain>
    </source>
</reference>
<name>AZOR_STAA1</name>
<keyword id="KW-0285">Flavoprotein</keyword>
<keyword id="KW-0288">FMN</keyword>
<keyword id="KW-0520">NAD</keyword>
<keyword id="KW-0560">Oxidoreductase</keyword>
<sequence>MAKVLYITAHPFNELVSNSMAAGKAFIETYQQHHPDDEVKHIDLFETYIPVIDKDVLTGWGKMSNGETLTDDEQMKVSRLSDILEEFLSADKYVFVTPMWNLSFPPVVKAYIDAISIAGKTFKYSAEGPQGLLTDKKVLHIQSRGGYYTEGPAADFEMGDRYLRTIMTFLGVPSYETIIIEGHNAEPHKTEEIKATSINNAEKLATTF</sequence>
<gene>
    <name evidence="1" type="primary">azoR</name>
    <name type="ordered locus">SAHV_0210</name>
</gene>
<proteinExistence type="inferred from homology"/>
<comment type="function">
    <text evidence="1">Quinone reductase that provides resistance to thiol-specific stress caused by electrophilic quinones.</text>
</comment>
<comment type="function">
    <text evidence="1">Also exhibits azoreductase activity. Catalyzes the reductive cleavage of the azo bond in aromatic azo compounds to the corresponding amines.</text>
</comment>
<comment type="catalytic activity">
    <reaction evidence="1">
        <text>2 a quinone + NADH + H(+) = 2 a 1,4-benzosemiquinone + NAD(+)</text>
        <dbReference type="Rhea" id="RHEA:65952"/>
        <dbReference type="ChEBI" id="CHEBI:15378"/>
        <dbReference type="ChEBI" id="CHEBI:57540"/>
        <dbReference type="ChEBI" id="CHEBI:57945"/>
        <dbReference type="ChEBI" id="CHEBI:132124"/>
        <dbReference type="ChEBI" id="CHEBI:134225"/>
    </reaction>
</comment>
<comment type="catalytic activity">
    <reaction evidence="1">
        <text>N,N-dimethyl-1,4-phenylenediamine + anthranilate + 2 NAD(+) = 2-(4-dimethylaminophenyl)diazenylbenzoate + 2 NADH + 2 H(+)</text>
        <dbReference type="Rhea" id="RHEA:55872"/>
        <dbReference type="ChEBI" id="CHEBI:15378"/>
        <dbReference type="ChEBI" id="CHEBI:15783"/>
        <dbReference type="ChEBI" id="CHEBI:16567"/>
        <dbReference type="ChEBI" id="CHEBI:57540"/>
        <dbReference type="ChEBI" id="CHEBI:57945"/>
        <dbReference type="ChEBI" id="CHEBI:71579"/>
        <dbReference type="EC" id="1.7.1.17"/>
    </reaction>
</comment>
<comment type="cofactor">
    <cofactor evidence="1">
        <name>FMN</name>
        <dbReference type="ChEBI" id="CHEBI:58210"/>
    </cofactor>
    <text evidence="1">Binds 1 FMN per subunit.</text>
</comment>
<comment type="subunit">
    <text evidence="1">Homodimer.</text>
</comment>
<comment type="similarity">
    <text evidence="1">Belongs to the azoreductase type 1 family.</text>
</comment>
<protein>
    <recommendedName>
        <fullName evidence="1">FMN-dependent NADH:quinone oxidoreductase</fullName>
        <ecNumber evidence="1">1.6.5.-</ecNumber>
    </recommendedName>
    <alternativeName>
        <fullName evidence="1">Azo-dye reductase</fullName>
    </alternativeName>
    <alternativeName>
        <fullName evidence="1">FMN-dependent NADH-azo compound oxidoreductase</fullName>
    </alternativeName>
    <alternativeName>
        <fullName evidence="1">FMN-dependent NADH-azoreductase</fullName>
        <ecNumber evidence="1">1.7.1.17</ecNumber>
    </alternativeName>
</protein>
<dbReference type="EC" id="1.6.5.-" evidence="1"/>
<dbReference type="EC" id="1.7.1.17" evidence="1"/>
<dbReference type="EMBL" id="AP009324">
    <property type="protein sequence ID" value="BAF77093.1"/>
    <property type="molecule type" value="Genomic_DNA"/>
</dbReference>
<dbReference type="RefSeq" id="WP_001151448.1">
    <property type="nucleotide sequence ID" value="NC_009782.1"/>
</dbReference>
<dbReference type="SMR" id="A7WXK6"/>
<dbReference type="KEGG" id="saw:SAHV_0210"/>
<dbReference type="HOGENOM" id="CLU_088964_3_1_9"/>
<dbReference type="GO" id="GO:0009055">
    <property type="term" value="F:electron transfer activity"/>
    <property type="evidence" value="ECO:0007669"/>
    <property type="project" value="UniProtKB-UniRule"/>
</dbReference>
<dbReference type="GO" id="GO:0010181">
    <property type="term" value="F:FMN binding"/>
    <property type="evidence" value="ECO:0007669"/>
    <property type="project" value="UniProtKB-UniRule"/>
</dbReference>
<dbReference type="GO" id="GO:0016652">
    <property type="term" value="F:oxidoreductase activity, acting on NAD(P)H as acceptor"/>
    <property type="evidence" value="ECO:0007669"/>
    <property type="project" value="UniProtKB-UniRule"/>
</dbReference>
<dbReference type="GO" id="GO:0016655">
    <property type="term" value="F:oxidoreductase activity, acting on NAD(P)H, quinone or similar compound as acceptor"/>
    <property type="evidence" value="ECO:0007669"/>
    <property type="project" value="InterPro"/>
</dbReference>
<dbReference type="Gene3D" id="3.40.50.360">
    <property type="match status" value="1"/>
</dbReference>
<dbReference type="HAMAP" id="MF_01216">
    <property type="entry name" value="Azoreductase_type1"/>
    <property type="match status" value="1"/>
</dbReference>
<dbReference type="InterPro" id="IPR003680">
    <property type="entry name" value="Flavodoxin_fold"/>
</dbReference>
<dbReference type="InterPro" id="IPR029039">
    <property type="entry name" value="Flavoprotein-like_sf"/>
</dbReference>
<dbReference type="InterPro" id="IPR050104">
    <property type="entry name" value="FMN-dep_NADH:Q_OxRdtase_AzoR1"/>
</dbReference>
<dbReference type="InterPro" id="IPR023048">
    <property type="entry name" value="NADH:quinone_OxRdtase_FMN_depd"/>
</dbReference>
<dbReference type="NCBIfam" id="NF010075">
    <property type="entry name" value="PRK13556.1"/>
    <property type="match status" value="1"/>
</dbReference>
<dbReference type="PANTHER" id="PTHR43741">
    <property type="entry name" value="FMN-DEPENDENT NADH-AZOREDUCTASE 1"/>
    <property type="match status" value="1"/>
</dbReference>
<dbReference type="PANTHER" id="PTHR43741:SF7">
    <property type="entry name" value="FMN-DEPENDENT NADH:QUINONE OXIDOREDUCTASE"/>
    <property type="match status" value="1"/>
</dbReference>
<dbReference type="Pfam" id="PF02525">
    <property type="entry name" value="Flavodoxin_2"/>
    <property type="match status" value="1"/>
</dbReference>
<dbReference type="SUPFAM" id="SSF52218">
    <property type="entry name" value="Flavoproteins"/>
    <property type="match status" value="1"/>
</dbReference>
<accession>A7WXK6</accession>
<feature type="chain" id="PRO_1000066532" description="FMN-dependent NADH:quinone oxidoreductase">
    <location>
        <begin position="1"/>
        <end position="208"/>
    </location>
</feature>
<feature type="binding site" evidence="1">
    <location>
        <begin position="17"/>
        <end position="19"/>
    </location>
    <ligand>
        <name>FMN</name>
        <dbReference type="ChEBI" id="CHEBI:58210"/>
    </ligand>
</feature>
<feature type="binding site" evidence="1">
    <location>
        <begin position="99"/>
        <end position="102"/>
    </location>
    <ligand>
        <name>FMN</name>
        <dbReference type="ChEBI" id="CHEBI:58210"/>
    </ligand>
</feature>
<feature type="binding site" evidence="1">
    <location>
        <begin position="143"/>
        <end position="146"/>
    </location>
    <ligand>
        <name>FMN</name>
        <dbReference type="ChEBI" id="CHEBI:58210"/>
    </ligand>
</feature>
<organism>
    <name type="scientific">Staphylococcus aureus (strain Mu3 / ATCC 700698)</name>
    <dbReference type="NCBI Taxonomy" id="418127"/>
    <lineage>
        <taxon>Bacteria</taxon>
        <taxon>Bacillati</taxon>
        <taxon>Bacillota</taxon>
        <taxon>Bacilli</taxon>
        <taxon>Bacillales</taxon>
        <taxon>Staphylococcaceae</taxon>
        <taxon>Staphylococcus</taxon>
    </lineage>
</organism>